<name>RSMD_BUCAI</name>
<proteinExistence type="inferred from homology"/>
<evidence type="ECO:0000250" key="1"/>
<evidence type="ECO:0000305" key="2"/>
<organism>
    <name type="scientific">Buchnera aphidicola subsp. Acyrthosiphon pisum (strain APS)</name>
    <name type="common">Acyrthosiphon pisum symbiotic bacterium</name>
    <dbReference type="NCBI Taxonomy" id="107806"/>
    <lineage>
        <taxon>Bacteria</taxon>
        <taxon>Pseudomonadati</taxon>
        <taxon>Pseudomonadota</taxon>
        <taxon>Gammaproteobacteria</taxon>
        <taxon>Enterobacterales</taxon>
        <taxon>Erwiniaceae</taxon>
        <taxon>Buchnera</taxon>
    </lineage>
</organism>
<feature type="chain" id="PRO_0000216243" description="Ribosomal RNA small subunit methyltransferase D">
    <location>
        <begin position="1"/>
        <end position="191"/>
    </location>
</feature>
<accession>P57136</accession>
<sequence>MNNSFFRKNSKIYIISGNLKGRKISFKNIPNLRPTTNQIRETLFEWLSKYIKNSRCLDCFAGSGVLGIEAISRYAAFSTLLEIEKKTFLTLKKNIKELNIYNVEIIRTNTLHWLKKTRNKPYDIIFIDPPYHQGLVKKTINLLENKKWIKKNSFIYIEQEKKQSIIVPKNWTLYKKKITNQIQCYLYICST</sequence>
<keyword id="KW-0489">Methyltransferase</keyword>
<keyword id="KW-1185">Reference proteome</keyword>
<keyword id="KW-0698">rRNA processing</keyword>
<keyword id="KW-0949">S-adenosyl-L-methionine</keyword>
<keyword id="KW-0808">Transferase</keyword>
<comment type="function">
    <text evidence="1">Specifically methylates the guanine in position 966 of 16S rRNA in the assembled 30S particle.</text>
</comment>
<comment type="catalytic activity">
    <reaction>
        <text>guanosine(966) in 16S rRNA + S-adenosyl-L-methionine = N(2)-methylguanosine(966) in 16S rRNA + S-adenosyl-L-homocysteine + H(+)</text>
        <dbReference type="Rhea" id="RHEA:23548"/>
        <dbReference type="Rhea" id="RHEA-COMP:10211"/>
        <dbReference type="Rhea" id="RHEA-COMP:10212"/>
        <dbReference type="ChEBI" id="CHEBI:15378"/>
        <dbReference type="ChEBI" id="CHEBI:57856"/>
        <dbReference type="ChEBI" id="CHEBI:59789"/>
        <dbReference type="ChEBI" id="CHEBI:74269"/>
        <dbReference type="ChEBI" id="CHEBI:74481"/>
        <dbReference type="EC" id="2.1.1.171"/>
    </reaction>
</comment>
<comment type="similarity">
    <text evidence="2">Belongs to the methyltransferase superfamily. RsmD family.</text>
</comment>
<gene>
    <name type="primary">rsmD</name>
    <name type="ordered locus">BU023</name>
</gene>
<dbReference type="EC" id="2.1.1.171"/>
<dbReference type="EMBL" id="BA000003">
    <property type="protein sequence ID" value="BAB12750.1"/>
    <property type="molecule type" value="Genomic_DNA"/>
</dbReference>
<dbReference type="RefSeq" id="NP_239864.1">
    <property type="nucleotide sequence ID" value="NC_002528.1"/>
</dbReference>
<dbReference type="RefSeq" id="WP_009873984.1">
    <property type="nucleotide sequence ID" value="NZ_AP036055.1"/>
</dbReference>
<dbReference type="SMR" id="P57136"/>
<dbReference type="STRING" id="563178.BUAP5A_023"/>
<dbReference type="EnsemblBacteria" id="BAB12750">
    <property type="protein sequence ID" value="BAB12750"/>
    <property type="gene ID" value="BAB12750"/>
</dbReference>
<dbReference type="KEGG" id="buc:BU023"/>
<dbReference type="PATRIC" id="fig|107806.10.peg.35"/>
<dbReference type="eggNOG" id="COG0742">
    <property type="taxonomic scope" value="Bacteria"/>
</dbReference>
<dbReference type="HOGENOM" id="CLU_075826_2_2_6"/>
<dbReference type="Proteomes" id="UP000001806">
    <property type="component" value="Chromosome"/>
</dbReference>
<dbReference type="GO" id="GO:0052913">
    <property type="term" value="F:16S rRNA (guanine(966)-N(2))-methyltransferase activity"/>
    <property type="evidence" value="ECO:0007669"/>
    <property type="project" value="UniProtKB-EC"/>
</dbReference>
<dbReference type="GO" id="GO:0003676">
    <property type="term" value="F:nucleic acid binding"/>
    <property type="evidence" value="ECO:0007669"/>
    <property type="project" value="InterPro"/>
</dbReference>
<dbReference type="CDD" id="cd02440">
    <property type="entry name" value="AdoMet_MTases"/>
    <property type="match status" value="1"/>
</dbReference>
<dbReference type="Gene3D" id="3.40.50.150">
    <property type="entry name" value="Vaccinia Virus protein VP39"/>
    <property type="match status" value="1"/>
</dbReference>
<dbReference type="InterPro" id="IPR002052">
    <property type="entry name" value="DNA_methylase_N6_adenine_CS"/>
</dbReference>
<dbReference type="InterPro" id="IPR004398">
    <property type="entry name" value="RNA_MeTrfase_RsmD"/>
</dbReference>
<dbReference type="InterPro" id="IPR029063">
    <property type="entry name" value="SAM-dependent_MTases_sf"/>
</dbReference>
<dbReference type="NCBIfam" id="TIGR00095">
    <property type="entry name" value="16S rRNA (guanine(966)-N(2))-methyltransferase RsmD"/>
    <property type="match status" value="1"/>
</dbReference>
<dbReference type="PANTHER" id="PTHR43542">
    <property type="entry name" value="METHYLTRANSFERASE"/>
    <property type="match status" value="1"/>
</dbReference>
<dbReference type="PANTHER" id="PTHR43542:SF1">
    <property type="entry name" value="METHYLTRANSFERASE"/>
    <property type="match status" value="1"/>
</dbReference>
<dbReference type="Pfam" id="PF03602">
    <property type="entry name" value="Cons_hypoth95"/>
    <property type="match status" value="1"/>
</dbReference>
<dbReference type="PIRSF" id="PIRSF004553">
    <property type="entry name" value="CHP00095"/>
    <property type="match status" value="1"/>
</dbReference>
<dbReference type="SUPFAM" id="SSF53335">
    <property type="entry name" value="S-adenosyl-L-methionine-dependent methyltransferases"/>
    <property type="match status" value="1"/>
</dbReference>
<dbReference type="PROSITE" id="PS00092">
    <property type="entry name" value="N6_MTASE"/>
    <property type="match status" value="1"/>
</dbReference>
<reference key="1">
    <citation type="journal article" date="2000" name="Nature">
        <title>Genome sequence of the endocellular bacterial symbiont of aphids Buchnera sp. APS.</title>
        <authorList>
            <person name="Shigenobu S."/>
            <person name="Watanabe H."/>
            <person name="Hattori M."/>
            <person name="Sakaki Y."/>
            <person name="Ishikawa H."/>
        </authorList>
    </citation>
    <scope>NUCLEOTIDE SEQUENCE [LARGE SCALE GENOMIC DNA]</scope>
    <source>
        <strain>APS</strain>
    </source>
</reference>
<protein>
    <recommendedName>
        <fullName>Ribosomal RNA small subunit methyltransferase D</fullName>
        <ecNumber>2.1.1.171</ecNumber>
    </recommendedName>
    <alternativeName>
        <fullName>16S rRNA m2G966 methyltransferase</fullName>
    </alternativeName>
    <alternativeName>
        <fullName>rRNA (guanine-N(2)-)-methyltransferase</fullName>
    </alternativeName>
</protein>